<accession>B2I2C1</accession>
<organism>
    <name type="scientific">Acinetobacter baumannii (strain ACICU)</name>
    <dbReference type="NCBI Taxonomy" id="405416"/>
    <lineage>
        <taxon>Bacteria</taxon>
        <taxon>Pseudomonadati</taxon>
        <taxon>Pseudomonadota</taxon>
        <taxon>Gammaproteobacteria</taxon>
        <taxon>Moraxellales</taxon>
        <taxon>Moraxellaceae</taxon>
        <taxon>Acinetobacter</taxon>
        <taxon>Acinetobacter calcoaceticus/baumannii complex</taxon>
    </lineage>
</organism>
<dbReference type="EC" id="3.5.2.7" evidence="1"/>
<dbReference type="EMBL" id="CP000863">
    <property type="protein sequence ID" value="ACC58908.1"/>
    <property type="molecule type" value="Genomic_DNA"/>
</dbReference>
<dbReference type="RefSeq" id="WP_000737802.1">
    <property type="nucleotide sequence ID" value="NZ_CP031380.1"/>
</dbReference>
<dbReference type="SMR" id="B2I2C1"/>
<dbReference type="KEGG" id="abc:ACICU_03599"/>
<dbReference type="HOGENOM" id="CLU_041647_0_0_6"/>
<dbReference type="UniPathway" id="UPA00379">
    <property type="reaction ID" value="UER00551"/>
</dbReference>
<dbReference type="Proteomes" id="UP000008839">
    <property type="component" value="Chromosome"/>
</dbReference>
<dbReference type="GO" id="GO:0005737">
    <property type="term" value="C:cytoplasm"/>
    <property type="evidence" value="ECO:0007669"/>
    <property type="project" value="UniProtKB-SubCell"/>
</dbReference>
<dbReference type="GO" id="GO:0050480">
    <property type="term" value="F:imidazolonepropionase activity"/>
    <property type="evidence" value="ECO:0007669"/>
    <property type="project" value="UniProtKB-UniRule"/>
</dbReference>
<dbReference type="GO" id="GO:0005506">
    <property type="term" value="F:iron ion binding"/>
    <property type="evidence" value="ECO:0007669"/>
    <property type="project" value="UniProtKB-UniRule"/>
</dbReference>
<dbReference type="GO" id="GO:0008270">
    <property type="term" value="F:zinc ion binding"/>
    <property type="evidence" value="ECO:0007669"/>
    <property type="project" value="UniProtKB-UniRule"/>
</dbReference>
<dbReference type="GO" id="GO:0019556">
    <property type="term" value="P:L-histidine catabolic process to glutamate and formamide"/>
    <property type="evidence" value="ECO:0007669"/>
    <property type="project" value="UniProtKB-UniPathway"/>
</dbReference>
<dbReference type="GO" id="GO:0019557">
    <property type="term" value="P:L-histidine catabolic process to glutamate and formate"/>
    <property type="evidence" value="ECO:0007669"/>
    <property type="project" value="UniProtKB-UniPathway"/>
</dbReference>
<dbReference type="CDD" id="cd01296">
    <property type="entry name" value="Imidazolone-5PH"/>
    <property type="match status" value="1"/>
</dbReference>
<dbReference type="FunFam" id="3.20.20.140:FF:000007">
    <property type="entry name" value="Imidazolonepropionase"/>
    <property type="match status" value="1"/>
</dbReference>
<dbReference type="Gene3D" id="3.20.20.140">
    <property type="entry name" value="Metal-dependent hydrolases"/>
    <property type="match status" value="1"/>
</dbReference>
<dbReference type="Gene3D" id="2.30.40.10">
    <property type="entry name" value="Urease, subunit C, domain 1"/>
    <property type="match status" value="1"/>
</dbReference>
<dbReference type="HAMAP" id="MF_00372">
    <property type="entry name" value="HutI"/>
    <property type="match status" value="1"/>
</dbReference>
<dbReference type="InterPro" id="IPR006680">
    <property type="entry name" value="Amidohydro-rel"/>
</dbReference>
<dbReference type="InterPro" id="IPR005920">
    <property type="entry name" value="HutI"/>
</dbReference>
<dbReference type="InterPro" id="IPR011059">
    <property type="entry name" value="Metal-dep_hydrolase_composite"/>
</dbReference>
<dbReference type="InterPro" id="IPR032466">
    <property type="entry name" value="Metal_Hydrolase"/>
</dbReference>
<dbReference type="NCBIfam" id="TIGR01224">
    <property type="entry name" value="hutI"/>
    <property type="match status" value="1"/>
</dbReference>
<dbReference type="PANTHER" id="PTHR42752">
    <property type="entry name" value="IMIDAZOLONEPROPIONASE"/>
    <property type="match status" value="1"/>
</dbReference>
<dbReference type="PANTHER" id="PTHR42752:SF1">
    <property type="entry name" value="IMIDAZOLONEPROPIONASE-RELATED"/>
    <property type="match status" value="1"/>
</dbReference>
<dbReference type="Pfam" id="PF01979">
    <property type="entry name" value="Amidohydro_1"/>
    <property type="match status" value="1"/>
</dbReference>
<dbReference type="SUPFAM" id="SSF51338">
    <property type="entry name" value="Composite domain of metallo-dependent hydrolases"/>
    <property type="match status" value="1"/>
</dbReference>
<dbReference type="SUPFAM" id="SSF51556">
    <property type="entry name" value="Metallo-dependent hydrolases"/>
    <property type="match status" value="1"/>
</dbReference>
<keyword id="KW-0963">Cytoplasm</keyword>
<keyword id="KW-0369">Histidine metabolism</keyword>
<keyword id="KW-0378">Hydrolase</keyword>
<keyword id="KW-0408">Iron</keyword>
<keyword id="KW-0479">Metal-binding</keyword>
<keyword id="KW-0862">Zinc</keyword>
<name>HUTI_ACIBC</name>
<feature type="chain" id="PRO_1000121525" description="Imidazolonepropionase">
    <location>
        <begin position="1"/>
        <end position="401"/>
    </location>
</feature>
<feature type="binding site" evidence="1">
    <location>
        <position position="66"/>
    </location>
    <ligand>
        <name>Fe(3+)</name>
        <dbReference type="ChEBI" id="CHEBI:29034"/>
    </ligand>
</feature>
<feature type="binding site" evidence="1">
    <location>
        <position position="66"/>
    </location>
    <ligand>
        <name>Zn(2+)</name>
        <dbReference type="ChEBI" id="CHEBI:29105"/>
    </ligand>
</feature>
<feature type="binding site" evidence="1">
    <location>
        <position position="68"/>
    </location>
    <ligand>
        <name>Fe(3+)</name>
        <dbReference type="ChEBI" id="CHEBI:29034"/>
    </ligand>
</feature>
<feature type="binding site" evidence="1">
    <location>
        <position position="68"/>
    </location>
    <ligand>
        <name>Zn(2+)</name>
        <dbReference type="ChEBI" id="CHEBI:29105"/>
    </ligand>
</feature>
<feature type="binding site" evidence="1">
    <location>
        <position position="75"/>
    </location>
    <ligand>
        <name>4-imidazolone-5-propanoate</name>
        <dbReference type="ChEBI" id="CHEBI:77893"/>
    </ligand>
</feature>
<feature type="binding site" evidence="1">
    <location>
        <position position="138"/>
    </location>
    <ligand>
        <name>4-imidazolone-5-propanoate</name>
        <dbReference type="ChEBI" id="CHEBI:77893"/>
    </ligand>
</feature>
<feature type="binding site" evidence="1">
    <location>
        <position position="138"/>
    </location>
    <ligand>
        <name>N-formimidoyl-L-glutamate</name>
        <dbReference type="ChEBI" id="CHEBI:58928"/>
    </ligand>
</feature>
<feature type="binding site" evidence="1">
    <location>
        <position position="171"/>
    </location>
    <ligand>
        <name>4-imidazolone-5-propanoate</name>
        <dbReference type="ChEBI" id="CHEBI:77893"/>
    </ligand>
</feature>
<feature type="binding site" evidence="1">
    <location>
        <position position="236"/>
    </location>
    <ligand>
        <name>Fe(3+)</name>
        <dbReference type="ChEBI" id="CHEBI:29034"/>
    </ligand>
</feature>
<feature type="binding site" evidence="1">
    <location>
        <position position="236"/>
    </location>
    <ligand>
        <name>Zn(2+)</name>
        <dbReference type="ChEBI" id="CHEBI:29105"/>
    </ligand>
</feature>
<feature type="binding site" evidence="1">
    <location>
        <position position="239"/>
    </location>
    <ligand>
        <name>4-imidazolone-5-propanoate</name>
        <dbReference type="ChEBI" id="CHEBI:77893"/>
    </ligand>
</feature>
<feature type="binding site" evidence="1">
    <location>
        <position position="311"/>
    </location>
    <ligand>
        <name>Fe(3+)</name>
        <dbReference type="ChEBI" id="CHEBI:29034"/>
    </ligand>
</feature>
<feature type="binding site" evidence="1">
    <location>
        <position position="311"/>
    </location>
    <ligand>
        <name>Zn(2+)</name>
        <dbReference type="ChEBI" id="CHEBI:29105"/>
    </ligand>
</feature>
<feature type="binding site" evidence="1">
    <location>
        <position position="313"/>
    </location>
    <ligand>
        <name>N-formimidoyl-L-glutamate</name>
        <dbReference type="ChEBI" id="CHEBI:58928"/>
    </ligand>
</feature>
<feature type="binding site" evidence="1">
    <location>
        <position position="315"/>
    </location>
    <ligand>
        <name>N-formimidoyl-L-glutamate</name>
        <dbReference type="ChEBI" id="CHEBI:58928"/>
    </ligand>
</feature>
<feature type="binding site" evidence="1">
    <location>
        <position position="316"/>
    </location>
    <ligand>
        <name>4-imidazolone-5-propanoate</name>
        <dbReference type="ChEBI" id="CHEBI:77893"/>
    </ligand>
</feature>
<gene>
    <name evidence="1" type="primary">hutI</name>
    <name type="ordered locus">ACICU_03599</name>
</gene>
<proteinExistence type="inferred from homology"/>
<evidence type="ECO:0000255" key="1">
    <source>
        <dbReference type="HAMAP-Rule" id="MF_00372"/>
    </source>
</evidence>
<comment type="function">
    <text evidence="1">Catalyzes the hydrolytic cleavage of the carbon-nitrogen bond in imidazolone-5-propanoate to yield N-formimidoyl-L-glutamate. It is the third step in the universal histidine degradation pathway.</text>
</comment>
<comment type="catalytic activity">
    <reaction evidence="1">
        <text>4-imidazolone-5-propanoate + H2O = N-formimidoyl-L-glutamate</text>
        <dbReference type="Rhea" id="RHEA:23660"/>
        <dbReference type="ChEBI" id="CHEBI:15377"/>
        <dbReference type="ChEBI" id="CHEBI:58928"/>
        <dbReference type="ChEBI" id="CHEBI:77893"/>
        <dbReference type="EC" id="3.5.2.7"/>
    </reaction>
</comment>
<comment type="cofactor">
    <cofactor evidence="1">
        <name>Zn(2+)</name>
        <dbReference type="ChEBI" id="CHEBI:29105"/>
    </cofactor>
    <cofactor evidence="1">
        <name>Fe(3+)</name>
        <dbReference type="ChEBI" id="CHEBI:29034"/>
    </cofactor>
    <text evidence="1">Binds 1 zinc or iron ion per subunit.</text>
</comment>
<comment type="pathway">
    <text evidence="1">Amino-acid degradation; L-histidine degradation into L-glutamate; N-formimidoyl-L-glutamate from L-histidine: step 3/3.</text>
</comment>
<comment type="subcellular location">
    <subcellularLocation>
        <location evidence="1">Cytoplasm</location>
    </subcellularLocation>
</comment>
<comment type="similarity">
    <text evidence="1">Belongs to the metallo-dependent hydrolases superfamily. HutI family.</text>
</comment>
<reference key="1">
    <citation type="journal article" date="2008" name="Antimicrob. Agents Chemother.">
        <title>Whole-genome pyrosequencing of an epidemic multidrug-resistant Acinetobacter baumannii strain belonging to the European clone II group.</title>
        <authorList>
            <person name="Iacono M."/>
            <person name="Villa L."/>
            <person name="Fortini D."/>
            <person name="Bordoni R."/>
            <person name="Imperi F."/>
            <person name="Bonnal R.J."/>
            <person name="Sicheritz-Ponten T."/>
            <person name="De Bellis G."/>
            <person name="Visca P."/>
            <person name="Cassone A."/>
            <person name="Carattoli A."/>
        </authorList>
    </citation>
    <scope>NUCLEOTIDE SEQUENCE [LARGE SCALE GENOMIC DNA]</scope>
    <source>
        <strain>ACICU</strain>
    </source>
</reference>
<sequence length="401" mass="44018">MKKLWQNCHIATMQNGQYSYIEDAAIVTEGHLIHWIGKQQQLPTDTYSETVDLNGAWVTPGFIDCHTHSVFGGNRSVEFEKRLQGVSYAEIAASGGGIASTVRATREASEEQLLNSALKRIRCMQQDGVTTIEIKSGYGLNYENERKMLRVIRQIGEKLPMTVKSTCLAAHALPPEYKDQSDAYIEHICTEMLPKLHAEGLVDAVDAFCEHLAFSPAQVERVFKTAQSLGLPVKLHAEQLSSLGGSSLAARYHALSADHLEYMTEDDVKAMAASGTVAVLLPGAFYLLRETQYPPIESLIKHGVRIALSSDLNPGTSPALSLRLMLNMGSTLFRLTPEQALAGVTIHAAQALGLEQTHGSLEQGKVADFVAWDIEHPSEIVYWLGGDLPKRVVQHGQEVIF</sequence>
<protein>
    <recommendedName>
        <fullName evidence="1">Imidazolonepropionase</fullName>
        <ecNumber evidence="1">3.5.2.7</ecNumber>
    </recommendedName>
    <alternativeName>
        <fullName evidence="1">Imidazolone-5-propionate hydrolase</fullName>
    </alternativeName>
</protein>